<organism>
    <name type="scientific">Staphylococcus epidermidis (strain ATCC 12228 / FDA PCI 1200)</name>
    <dbReference type="NCBI Taxonomy" id="176280"/>
    <lineage>
        <taxon>Bacteria</taxon>
        <taxon>Bacillati</taxon>
        <taxon>Bacillota</taxon>
        <taxon>Bacilli</taxon>
        <taxon>Bacillales</taxon>
        <taxon>Staphylococcaceae</taxon>
        <taxon>Staphylococcus</taxon>
    </lineage>
</organism>
<accession>Q8CS90</accession>
<proteinExistence type="inferred from homology"/>
<gene>
    <name evidence="1" type="primary">ruvA</name>
    <name type="ordered locus">SE_1325</name>
</gene>
<protein>
    <recommendedName>
        <fullName evidence="1">Holliday junction branch migration complex subunit RuvA</fullName>
    </recommendedName>
</protein>
<name>RUVA_STAES</name>
<reference key="1">
    <citation type="journal article" date="2003" name="Mol. Microbiol.">
        <title>Genome-based analysis of virulence genes in a non-biofilm-forming Staphylococcus epidermidis strain (ATCC 12228).</title>
        <authorList>
            <person name="Zhang Y.-Q."/>
            <person name="Ren S.-X."/>
            <person name="Li H.-L."/>
            <person name="Wang Y.-X."/>
            <person name="Fu G."/>
            <person name="Yang J."/>
            <person name="Qin Z.-Q."/>
            <person name="Miao Y.-G."/>
            <person name="Wang W.-Y."/>
            <person name="Chen R.-S."/>
            <person name="Shen Y."/>
            <person name="Chen Z."/>
            <person name="Yuan Z.-H."/>
            <person name="Zhao G.-P."/>
            <person name="Qu D."/>
            <person name="Danchin A."/>
            <person name="Wen Y.-M."/>
        </authorList>
    </citation>
    <scope>NUCLEOTIDE SEQUENCE [LARGE SCALE GENOMIC DNA]</scope>
    <source>
        <strain>ATCC 12228 / FDA PCI 1200</strain>
    </source>
</reference>
<sequence length="200" mass="22324">MYAYIKGTLSQLFPTHVVVETCGIGYEIQTPNSYRFQKYLEKEVQIYTSLIVREDAQLLYGFINEEEKEMFLSLIKVTGIGPKSALAILASSTPHEVKLAIENENDAYLTQFPGIGKKTARQIVLDLKGKVTITEENSDDLLQTQVNGNEQNQIISEALLALQALGYSKRELTKVEKSLNKHNVNSVDEAVKIGLQTLVS</sequence>
<feature type="chain" id="PRO_0000094684" description="Holliday junction branch migration complex subunit RuvA">
    <location>
        <begin position="1"/>
        <end position="200"/>
    </location>
</feature>
<feature type="region of interest" description="Domain I" evidence="1">
    <location>
        <begin position="1"/>
        <end position="63"/>
    </location>
</feature>
<feature type="region of interest" description="Domain II" evidence="1">
    <location>
        <begin position="64"/>
        <end position="142"/>
    </location>
</feature>
<feature type="region of interest" description="Flexible linker" evidence="1">
    <location>
        <begin position="143"/>
        <end position="149"/>
    </location>
</feature>
<feature type="region of interest" description="Domain III" evidence="1">
    <location>
        <begin position="150"/>
        <end position="200"/>
    </location>
</feature>
<evidence type="ECO:0000255" key="1">
    <source>
        <dbReference type="HAMAP-Rule" id="MF_00031"/>
    </source>
</evidence>
<comment type="function">
    <text evidence="1">The RuvA-RuvB-RuvC complex processes Holliday junction (HJ) DNA during genetic recombination and DNA repair, while the RuvA-RuvB complex plays an important role in the rescue of blocked DNA replication forks via replication fork reversal (RFR). RuvA specifically binds to HJ cruciform DNA, conferring on it an open structure. The RuvB hexamer acts as an ATP-dependent pump, pulling dsDNA into and through the RuvAB complex. HJ branch migration allows RuvC to scan DNA until it finds its consensus sequence, where it cleaves and resolves the cruciform DNA.</text>
</comment>
<comment type="subunit">
    <text evidence="1">Homotetramer. Forms an RuvA(8)-RuvB(12)-Holliday junction (HJ) complex. HJ DNA is sandwiched between 2 RuvA tetramers; dsDNA enters through RuvA and exits via RuvB. An RuvB hexamer assembles on each DNA strand where it exits the tetramer. Each RuvB hexamer is contacted by two RuvA subunits (via domain III) on 2 adjacent RuvB subunits; this complex drives branch migration. In the full resolvosome a probable DNA-RuvA(4)-RuvB(12)-RuvC(2) complex forms which resolves the HJ.</text>
</comment>
<comment type="subcellular location">
    <subcellularLocation>
        <location evidence="1">Cytoplasm</location>
    </subcellularLocation>
</comment>
<comment type="domain">
    <text evidence="1">Has three domains with a flexible linker between the domains II and III and assumes an 'L' shape. Domain III is highly mobile and contacts RuvB.</text>
</comment>
<comment type="similarity">
    <text evidence="1">Belongs to the RuvA family.</text>
</comment>
<keyword id="KW-0963">Cytoplasm</keyword>
<keyword id="KW-0227">DNA damage</keyword>
<keyword id="KW-0233">DNA recombination</keyword>
<keyword id="KW-0234">DNA repair</keyword>
<keyword id="KW-0238">DNA-binding</keyword>
<dbReference type="EMBL" id="AE015929">
    <property type="protein sequence ID" value="AAO04924.1"/>
    <property type="molecule type" value="Genomic_DNA"/>
</dbReference>
<dbReference type="RefSeq" id="NP_764880.1">
    <property type="nucleotide sequence ID" value="NC_004461.1"/>
</dbReference>
<dbReference type="RefSeq" id="WP_001830895.1">
    <property type="nucleotide sequence ID" value="NZ_WBME01000016.1"/>
</dbReference>
<dbReference type="SMR" id="Q8CS90"/>
<dbReference type="GeneID" id="50018560"/>
<dbReference type="KEGG" id="sep:SE_1325"/>
<dbReference type="PATRIC" id="fig|176280.10.peg.1294"/>
<dbReference type="eggNOG" id="COG0632">
    <property type="taxonomic scope" value="Bacteria"/>
</dbReference>
<dbReference type="HOGENOM" id="CLU_087936_1_0_9"/>
<dbReference type="OrthoDB" id="5293449at2"/>
<dbReference type="Proteomes" id="UP000001411">
    <property type="component" value="Chromosome"/>
</dbReference>
<dbReference type="GO" id="GO:0005737">
    <property type="term" value="C:cytoplasm"/>
    <property type="evidence" value="ECO:0007669"/>
    <property type="project" value="UniProtKB-SubCell"/>
</dbReference>
<dbReference type="GO" id="GO:0009379">
    <property type="term" value="C:Holliday junction helicase complex"/>
    <property type="evidence" value="ECO:0007669"/>
    <property type="project" value="InterPro"/>
</dbReference>
<dbReference type="GO" id="GO:0048476">
    <property type="term" value="C:Holliday junction resolvase complex"/>
    <property type="evidence" value="ECO:0007669"/>
    <property type="project" value="UniProtKB-UniRule"/>
</dbReference>
<dbReference type="GO" id="GO:0005524">
    <property type="term" value="F:ATP binding"/>
    <property type="evidence" value="ECO:0007669"/>
    <property type="project" value="InterPro"/>
</dbReference>
<dbReference type="GO" id="GO:0000400">
    <property type="term" value="F:four-way junction DNA binding"/>
    <property type="evidence" value="ECO:0007669"/>
    <property type="project" value="UniProtKB-UniRule"/>
</dbReference>
<dbReference type="GO" id="GO:0009378">
    <property type="term" value="F:four-way junction helicase activity"/>
    <property type="evidence" value="ECO:0007669"/>
    <property type="project" value="InterPro"/>
</dbReference>
<dbReference type="GO" id="GO:0006310">
    <property type="term" value="P:DNA recombination"/>
    <property type="evidence" value="ECO:0007669"/>
    <property type="project" value="UniProtKB-UniRule"/>
</dbReference>
<dbReference type="GO" id="GO:0006281">
    <property type="term" value="P:DNA repair"/>
    <property type="evidence" value="ECO:0007669"/>
    <property type="project" value="UniProtKB-UniRule"/>
</dbReference>
<dbReference type="CDD" id="cd14332">
    <property type="entry name" value="UBA_RuvA_C"/>
    <property type="match status" value="1"/>
</dbReference>
<dbReference type="Gene3D" id="1.10.150.20">
    <property type="entry name" value="5' to 3' exonuclease, C-terminal subdomain"/>
    <property type="match status" value="1"/>
</dbReference>
<dbReference type="Gene3D" id="2.40.50.140">
    <property type="entry name" value="Nucleic acid-binding proteins"/>
    <property type="match status" value="1"/>
</dbReference>
<dbReference type="HAMAP" id="MF_00031">
    <property type="entry name" value="DNA_HJ_migration_RuvA"/>
    <property type="match status" value="1"/>
</dbReference>
<dbReference type="InterPro" id="IPR013849">
    <property type="entry name" value="DNA_helicase_Holl-junc_RuvA_I"/>
</dbReference>
<dbReference type="InterPro" id="IPR003583">
    <property type="entry name" value="Hlx-hairpin-Hlx_DNA-bd_motif"/>
</dbReference>
<dbReference type="InterPro" id="IPR012340">
    <property type="entry name" value="NA-bd_OB-fold"/>
</dbReference>
<dbReference type="InterPro" id="IPR000085">
    <property type="entry name" value="RuvA"/>
</dbReference>
<dbReference type="InterPro" id="IPR010994">
    <property type="entry name" value="RuvA_2-like"/>
</dbReference>
<dbReference type="InterPro" id="IPR011114">
    <property type="entry name" value="RuvA_C"/>
</dbReference>
<dbReference type="InterPro" id="IPR036267">
    <property type="entry name" value="RuvA_C_sf"/>
</dbReference>
<dbReference type="NCBIfam" id="TIGR00084">
    <property type="entry name" value="ruvA"/>
    <property type="match status" value="1"/>
</dbReference>
<dbReference type="Pfam" id="PF14520">
    <property type="entry name" value="HHH_5"/>
    <property type="match status" value="1"/>
</dbReference>
<dbReference type="Pfam" id="PF07499">
    <property type="entry name" value="RuvA_C"/>
    <property type="match status" value="1"/>
</dbReference>
<dbReference type="Pfam" id="PF01330">
    <property type="entry name" value="RuvA_N"/>
    <property type="match status" value="1"/>
</dbReference>
<dbReference type="SMART" id="SM00278">
    <property type="entry name" value="HhH1"/>
    <property type="match status" value="2"/>
</dbReference>
<dbReference type="SUPFAM" id="SSF46929">
    <property type="entry name" value="DNA helicase RuvA subunit, C-terminal domain"/>
    <property type="match status" value="1"/>
</dbReference>
<dbReference type="SUPFAM" id="SSF50249">
    <property type="entry name" value="Nucleic acid-binding proteins"/>
    <property type="match status" value="1"/>
</dbReference>
<dbReference type="SUPFAM" id="SSF47781">
    <property type="entry name" value="RuvA domain 2-like"/>
    <property type="match status" value="1"/>
</dbReference>